<accession>Q8XXJ7</accession>
<dbReference type="EC" id="3.5.2.17"/>
<dbReference type="EMBL" id="AL646052">
    <property type="protein sequence ID" value="CAD15823.1"/>
    <property type="molecule type" value="Genomic_DNA"/>
</dbReference>
<dbReference type="SMR" id="Q8XXJ7"/>
<dbReference type="STRING" id="267608.RSc2116"/>
<dbReference type="EnsemblBacteria" id="CAD15823">
    <property type="protein sequence ID" value="CAD15823"/>
    <property type="gene ID" value="RSc2116"/>
</dbReference>
<dbReference type="KEGG" id="rso:RSc2116"/>
<dbReference type="eggNOG" id="COG2351">
    <property type="taxonomic scope" value="Bacteria"/>
</dbReference>
<dbReference type="HOGENOM" id="CLU_115536_1_1_4"/>
<dbReference type="Proteomes" id="UP000001436">
    <property type="component" value="Chromosome"/>
</dbReference>
<dbReference type="GO" id="GO:0033971">
    <property type="term" value="F:hydroxyisourate hydrolase activity"/>
    <property type="evidence" value="ECO:0007669"/>
    <property type="project" value="UniProtKB-EC"/>
</dbReference>
<dbReference type="GO" id="GO:0006144">
    <property type="term" value="P:purine nucleobase metabolic process"/>
    <property type="evidence" value="ECO:0007669"/>
    <property type="project" value="UniProtKB-KW"/>
</dbReference>
<dbReference type="CDD" id="cd05822">
    <property type="entry name" value="TLP_HIUase"/>
    <property type="match status" value="1"/>
</dbReference>
<dbReference type="FunFam" id="2.60.40.180:FF:000005">
    <property type="entry name" value="5-hydroxyisourate hydrolase"/>
    <property type="match status" value="1"/>
</dbReference>
<dbReference type="Gene3D" id="2.60.40.180">
    <property type="entry name" value="Transthyretin/hydroxyisourate hydrolase domain"/>
    <property type="match status" value="1"/>
</dbReference>
<dbReference type="InterPro" id="IPR014306">
    <property type="entry name" value="Hydroxyisourate_hydrolase"/>
</dbReference>
<dbReference type="InterPro" id="IPR023418">
    <property type="entry name" value="Thyroxine_BS"/>
</dbReference>
<dbReference type="InterPro" id="IPR000895">
    <property type="entry name" value="Transthyretin/HIU_hydrolase"/>
</dbReference>
<dbReference type="InterPro" id="IPR023416">
    <property type="entry name" value="Transthyretin/HIU_hydrolase_d"/>
</dbReference>
<dbReference type="InterPro" id="IPR036817">
    <property type="entry name" value="Transthyretin/HIU_hydrolase_sf"/>
</dbReference>
<dbReference type="InterPro" id="IPR023419">
    <property type="entry name" value="Transthyretin_CS"/>
</dbReference>
<dbReference type="NCBIfam" id="TIGR02962">
    <property type="entry name" value="hdxy_isourate"/>
    <property type="match status" value="1"/>
</dbReference>
<dbReference type="PANTHER" id="PTHR10395:SF7">
    <property type="entry name" value="5-HYDROXYISOURATE HYDROLASE"/>
    <property type="match status" value="1"/>
</dbReference>
<dbReference type="PANTHER" id="PTHR10395">
    <property type="entry name" value="URICASE AND TRANSTHYRETIN-RELATED"/>
    <property type="match status" value="1"/>
</dbReference>
<dbReference type="Pfam" id="PF00576">
    <property type="entry name" value="Transthyretin"/>
    <property type="match status" value="1"/>
</dbReference>
<dbReference type="PRINTS" id="PR00189">
    <property type="entry name" value="TRNSTHYRETIN"/>
</dbReference>
<dbReference type="SUPFAM" id="SSF49472">
    <property type="entry name" value="Transthyretin (synonym: prealbumin)"/>
    <property type="match status" value="1"/>
</dbReference>
<dbReference type="PROSITE" id="PS00768">
    <property type="entry name" value="TRANSTHYRETIN_1"/>
    <property type="match status" value="1"/>
</dbReference>
<dbReference type="PROSITE" id="PS00769">
    <property type="entry name" value="TRANSTHYRETIN_2"/>
    <property type="match status" value="1"/>
</dbReference>
<sequence>MGRLTTHVLDTAAGTPGKDLAITLFKIVNNLRQPIKTVRTNHDGRCEAPLLEGEALQAGIYELDFAVGDYYRAAGVSLPDPAFLDVVTLRFGVADAGAHYHVPLLVSPWSYSTYRGS</sequence>
<comment type="function">
    <text evidence="1">Catalyzes the hydrolysis of 5-hydroxyisourate (HIU) to 2-oxo-4-hydroxy-4-carboxy-5-ureidoimidazoline (OHCU).</text>
</comment>
<comment type="catalytic activity">
    <reaction>
        <text>5-hydroxyisourate + H2O = 5-hydroxy-2-oxo-4-ureido-2,5-dihydro-1H-imidazole-5-carboxylate + H(+)</text>
        <dbReference type="Rhea" id="RHEA:23736"/>
        <dbReference type="ChEBI" id="CHEBI:15377"/>
        <dbReference type="ChEBI" id="CHEBI:15378"/>
        <dbReference type="ChEBI" id="CHEBI:18072"/>
        <dbReference type="ChEBI" id="CHEBI:58639"/>
        <dbReference type="EC" id="3.5.2.17"/>
    </reaction>
</comment>
<comment type="subunit">
    <text evidence="1">Homotetramer.</text>
</comment>
<comment type="miscellaneous">
    <text>HIU hydrolysis also occurs spontaneously, but more slowly.</text>
</comment>
<comment type="similarity">
    <text evidence="2">Belongs to the transthyretin family. 5-hydroxyisourate hydrolase subfamily.</text>
</comment>
<gene>
    <name type="ordered locus">RSc2116</name>
    <name type="ORF">RS01488</name>
</gene>
<feature type="chain" id="PRO_0000050614" description="5-hydroxyisourate hydrolase">
    <location>
        <begin position="1"/>
        <end position="117"/>
    </location>
</feature>
<feature type="binding site" evidence="1">
    <location>
        <position position="7"/>
    </location>
    <ligand>
        <name>substrate</name>
    </ligand>
</feature>
<feature type="binding site" evidence="1">
    <location>
        <position position="45"/>
    </location>
    <ligand>
        <name>substrate</name>
    </ligand>
</feature>
<feature type="binding site" evidence="1">
    <location>
        <position position="114"/>
    </location>
    <ligand>
        <name>substrate</name>
    </ligand>
</feature>
<evidence type="ECO:0000250" key="1"/>
<evidence type="ECO:0000305" key="2"/>
<name>HIUH_RALN1</name>
<keyword id="KW-0378">Hydrolase</keyword>
<keyword id="KW-0659">Purine metabolism</keyword>
<keyword id="KW-1185">Reference proteome</keyword>
<proteinExistence type="inferred from homology"/>
<reference key="1">
    <citation type="journal article" date="2002" name="Nature">
        <title>Genome sequence of the plant pathogen Ralstonia solanacearum.</title>
        <authorList>
            <person name="Salanoubat M."/>
            <person name="Genin S."/>
            <person name="Artiguenave F."/>
            <person name="Gouzy J."/>
            <person name="Mangenot S."/>
            <person name="Arlat M."/>
            <person name="Billault A."/>
            <person name="Brottier P."/>
            <person name="Camus J.-C."/>
            <person name="Cattolico L."/>
            <person name="Chandler M."/>
            <person name="Choisne N."/>
            <person name="Claudel-Renard C."/>
            <person name="Cunnac S."/>
            <person name="Demange N."/>
            <person name="Gaspin C."/>
            <person name="Lavie M."/>
            <person name="Moisan A."/>
            <person name="Robert C."/>
            <person name="Saurin W."/>
            <person name="Schiex T."/>
            <person name="Siguier P."/>
            <person name="Thebault P."/>
            <person name="Whalen M."/>
            <person name="Wincker P."/>
            <person name="Levy M."/>
            <person name="Weissenbach J."/>
            <person name="Boucher C.A."/>
        </authorList>
    </citation>
    <scope>NUCLEOTIDE SEQUENCE [LARGE SCALE GENOMIC DNA]</scope>
    <source>
        <strain>ATCC BAA-1114 / GMI1000</strain>
    </source>
</reference>
<protein>
    <recommendedName>
        <fullName>5-hydroxyisourate hydrolase</fullName>
        <shortName>HIU hydrolase</shortName>
        <shortName>HIUHase</shortName>
        <ecNumber>3.5.2.17</ecNumber>
    </recommendedName>
</protein>
<organism>
    <name type="scientific">Ralstonia nicotianae (strain ATCC BAA-1114 / GMI1000)</name>
    <name type="common">Ralstonia solanacearum</name>
    <dbReference type="NCBI Taxonomy" id="267608"/>
    <lineage>
        <taxon>Bacteria</taxon>
        <taxon>Pseudomonadati</taxon>
        <taxon>Pseudomonadota</taxon>
        <taxon>Betaproteobacteria</taxon>
        <taxon>Burkholderiales</taxon>
        <taxon>Burkholderiaceae</taxon>
        <taxon>Ralstonia</taxon>
        <taxon>Ralstonia solanacearum species complex</taxon>
    </lineage>
</organism>